<accession>Q0AC04</accession>
<sequence>MKASIRNKLERLRERHEEISALLAEPDTASDQKRFAALSREYAQLEPVIAELNHYQETEQALASAREMARDDDLEIREMAEEEISQAQARLEALEAELQVLLLPPDPNDGRNLYLEIRAGTGGDEAALFAGDLLRMYARYAERHGWRLEEISASEGEQGGYKEVITRISGEGAWSRLKFESGAHRVQRVPETESQGRIHTSACTVAVLPEPDAVEDITINPAELRVDTFRASGAGGQHVNKTDSAIRITHLPTGVVVECQSERSQHKNRAQALALLQARLKNAQQAEQSAQQTEQRRQLVGSGDRSERIRTYNFPQGRITDHRINLTLYRLEEILQGDLDQLVEPLRTEHQADQLAALAGD</sequence>
<keyword id="KW-0963">Cytoplasm</keyword>
<keyword id="KW-0488">Methylation</keyword>
<keyword id="KW-0648">Protein biosynthesis</keyword>
<keyword id="KW-1185">Reference proteome</keyword>
<reference key="1">
    <citation type="submission" date="2006-08" db="EMBL/GenBank/DDBJ databases">
        <title>Complete sequence of Alkalilimnicola ehrilichei MLHE-1.</title>
        <authorList>
            <person name="Copeland A."/>
            <person name="Lucas S."/>
            <person name="Lapidus A."/>
            <person name="Barry K."/>
            <person name="Detter J.C."/>
            <person name="Glavina del Rio T."/>
            <person name="Hammon N."/>
            <person name="Israni S."/>
            <person name="Dalin E."/>
            <person name="Tice H."/>
            <person name="Pitluck S."/>
            <person name="Sims D."/>
            <person name="Brettin T."/>
            <person name="Bruce D."/>
            <person name="Han C."/>
            <person name="Tapia R."/>
            <person name="Gilna P."/>
            <person name="Schmutz J."/>
            <person name="Larimer F."/>
            <person name="Land M."/>
            <person name="Hauser L."/>
            <person name="Kyrpides N."/>
            <person name="Mikhailova N."/>
            <person name="Oremland R.S."/>
            <person name="Hoeft S.E."/>
            <person name="Switzer-Blum J."/>
            <person name="Kulp T."/>
            <person name="King G."/>
            <person name="Tabita R."/>
            <person name="Witte B."/>
            <person name="Santini J.M."/>
            <person name="Basu P."/>
            <person name="Hollibaugh J.T."/>
            <person name="Xie G."/>
            <person name="Stolz J.F."/>
            <person name="Richardson P."/>
        </authorList>
    </citation>
    <scope>NUCLEOTIDE SEQUENCE [LARGE SCALE GENOMIC DNA]</scope>
    <source>
        <strain>ATCC BAA-1101 / DSM 17681 / MLHE-1</strain>
    </source>
</reference>
<feature type="chain" id="PRO_0000263228" description="Peptide chain release factor 1">
    <location>
        <begin position="1"/>
        <end position="361"/>
    </location>
</feature>
<feature type="region of interest" description="Disordered" evidence="2">
    <location>
        <begin position="285"/>
        <end position="306"/>
    </location>
</feature>
<feature type="modified residue" description="N5-methylglutamine" evidence="1">
    <location>
        <position position="237"/>
    </location>
</feature>
<comment type="function">
    <text evidence="1">Peptide chain release factor 1 directs the termination of translation in response to the peptide chain termination codons UAG and UAA.</text>
</comment>
<comment type="subcellular location">
    <subcellularLocation>
        <location evidence="1">Cytoplasm</location>
    </subcellularLocation>
</comment>
<comment type="PTM">
    <text evidence="1">Methylated by PrmC. Methylation increases the termination efficiency of RF1.</text>
</comment>
<comment type="similarity">
    <text evidence="1">Belongs to the prokaryotic/mitochondrial release factor family.</text>
</comment>
<gene>
    <name evidence="1" type="primary">prfA</name>
    <name type="ordered locus">Mlg_0278</name>
</gene>
<proteinExistence type="inferred from homology"/>
<evidence type="ECO:0000255" key="1">
    <source>
        <dbReference type="HAMAP-Rule" id="MF_00093"/>
    </source>
</evidence>
<evidence type="ECO:0000256" key="2">
    <source>
        <dbReference type="SAM" id="MobiDB-lite"/>
    </source>
</evidence>
<organism>
    <name type="scientific">Alkalilimnicola ehrlichii (strain ATCC BAA-1101 / DSM 17681 / MLHE-1)</name>
    <dbReference type="NCBI Taxonomy" id="187272"/>
    <lineage>
        <taxon>Bacteria</taxon>
        <taxon>Pseudomonadati</taxon>
        <taxon>Pseudomonadota</taxon>
        <taxon>Gammaproteobacteria</taxon>
        <taxon>Chromatiales</taxon>
        <taxon>Ectothiorhodospiraceae</taxon>
        <taxon>Alkalilimnicola</taxon>
    </lineage>
</organism>
<protein>
    <recommendedName>
        <fullName evidence="1">Peptide chain release factor 1</fullName>
        <shortName evidence="1">RF-1</shortName>
    </recommendedName>
</protein>
<name>RF1_ALKEH</name>
<dbReference type="EMBL" id="CP000453">
    <property type="protein sequence ID" value="ABI55633.1"/>
    <property type="molecule type" value="Genomic_DNA"/>
</dbReference>
<dbReference type="RefSeq" id="WP_011628029.1">
    <property type="nucleotide sequence ID" value="NC_008340.1"/>
</dbReference>
<dbReference type="SMR" id="Q0AC04"/>
<dbReference type="KEGG" id="aeh:Mlg_0278"/>
<dbReference type="eggNOG" id="COG0216">
    <property type="taxonomic scope" value="Bacteria"/>
</dbReference>
<dbReference type="HOGENOM" id="CLU_036856_0_1_6"/>
<dbReference type="OrthoDB" id="9806673at2"/>
<dbReference type="Proteomes" id="UP000001962">
    <property type="component" value="Chromosome"/>
</dbReference>
<dbReference type="GO" id="GO:0005737">
    <property type="term" value="C:cytoplasm"/>
    <property type="evidence" value="ECO:0007669"/>
    <property type="project" value="UniProtKB-SubCell"/>
</dbReference>
<dbReference type="GO" id="GO:0016149">
    <property type="term" value="F:translation release factor activity, codon specific"/>
    <property type="evidence" value="ECO:0007669"/>
    <property type="project" value="UniProtKB-UniRule"/>
</dbReference>
<dbReference type="FunFam" id="3.30.160.20:FF:000004">
    <property type="entry name" value="Peptide chain release factor 1"/>
    <property type="match status" value="1"/>
</dbReference>
<dbReference type="FunFam" id="3.30.70.1660:FF:000002">
    <property type="entry name" value="Peptide chain release factor 1"/>
    <property type="match status" value="1"/>
</dbReference>
<dbReference type="FunFam" id="3.30.70.1660:FF:000004">
    <property type="entry name" value="Peptide chain release factor 1"/>
    <property type="match status" value="1"/>
</dbReference>
<dbReference type="Gene3D" id="3.30.160.20">
    <property type="match status" value="1"/>
</dbReference>
<dbReference type="Gene3D" id="3.30.70.1660">
    <property type="match status" value="2"/>
</dbReference>
<dbReference type="Gene3D" id="6.10.140.1950">
    <property type="match status" value="1"/>
</dbReference>
<dbReference type="HAMAP" id="MF_00093">
    <property type="entry name" value="Rel_fac_1"/>
    <property type="match status" value="1"/>
</dbReference>
<dbReference type="InterPro" id="IPR005139">
    <property type="entry name" value="PCRF"/>
</dbReference>
<dbReference type="InterPro" id="IPR000352">
    <property type="entry name" value="Pep_chain_release_fac_I"/>
</dbReference>
<dbReference type="InterPro" id="IPR045853">
    <property type="entry name" value="Pep_chain_release_fac_I_sf"/>
</dbReference>
<dbReference type="InterPro" id="IPR050057">
    <property type="entry name" value="Prokaryotic/Mito_RF"/>
</dbReference>
<dbReference type="InterPro" id="IPR004373">
    <property type="entry name" value="RF-1"/>
</dbReference>
<dbReference type="NCBIfam" id="TIGR00019">
    <property type="entry name" value="prfA"/>
    <property type="match status" value="1"/>
</dbReference>
<dbReference type="NCBIfam" id="NF001859">
    <property type="entry name" value="PRK00591.1"/>
    <property type="match status" value="1"/>
</dbReference>
<dbReference type="PANTHER" id="PTHR43804">
    <property type="entry name" value="LD18447P"/>
    <property type="match status" value="1"/>
</dbReference>
<dbReference type="PANTHER" id="PTHR43804:SF7">
    <property type="entry name" value="LD18447P"/>
    <property type="match status" value="1"/>
</dbReference>
<dbReference type="Pfam" id="PF03462">
    <property type="entry name" value="PCRF"/>
    <property type="match status" value="1"/>
</dbReference>
<dbReference type="Pfam" id="PF00472">
    <property type="entry name" value="RF-1"/>
    <property type="match status" value="1"/>
</dbReference>
<dbReference type="SMART" id="SM00937">
    <property type="entry name" value="PCRF"/>
    <property type="match status" value="1"/>
</dbReference>
<dbReference type="SUPFAM" id="SSF75620">
    <property type="entry name" value="Release factor"/>
    <property type="match status" value="1"/>
</dbReference>
<dbReference type="PROSITE" id="PS00745">
    <property type="entry name" value="RF_PROK_I"/>
    <property type="match status" value="1"/>
</dbReference>